<name>MPK19_ARATH</name>
<dbReference type="EC" id="2.7.11.24"/>
<dbReference type="EMBL" id="AB023038">
    <property type="protein sequence ID" value="BAB02403.1"/>
    <property type="status" value="ALT_SEQ"/>
    <property type="molecule type" value="Genomic_DNA"/>
</dbReference>
<dbReference type="EMBL" id="CP002686">
    <property type="protein sequence ID" value="AEE75559.1"/>
    <property type="molecule type" value="Genomic_DNA"/>
</dbReference>
<dbReference type="EMBL" id="BX824157">
    <property type="status" value="NOT_ANNOTATED_CDS"/>
    <property type="molecule type" value="mRNA"/>
</dbReference>
<dbReference type="RefSeq" id="NP_188090.2">
    <property type="nucleotide sequence ID" value="NM_112333.3"/>
</dbReference>
<dbReference type="SMR" id="Q9LUC3"/>
<dbReference type="BioGRID" id="6034">
    <property type="interactions" value="4"/>
</dbReference>
<dbReference type="FunCoup" id="Q9LUC3">
    <property type="interactions" value="328"/>
</dbReference>
<dbReference type="IntAct" id="Q9LUC3">
    <property type="interactions" value="4"/>
</dbReference>
<dbReference type="STRING" id="3702.Q9LUC3"/>
<dbReference type="PaxDb" id="3702-AT3G14720.1"/>
<dbReference type="ProteomicsDB" id="239072"/>
<dbReference type="EnsemblPlants" id="AT3G14720.1">
    <property type="protein sequence ID" value="AT3G14720.1"/>
    <property type="gene ID" value="AT3G14720"/>
</dbReference>
<dbReference type="GeneID" id="820700"/>
<dbReference type="Gramene" id="AT3G14720.1">
    <property type="protein sequence ID" value="AT3G14720.1"/>
    <property type="gene ID" value="AT3G14720"/>
</dbReference>
<dbReference type="KEGG" id="ath:AT3G14720"/>
<dbReference type="Araport" id="AT3G14720"/>
<dbReference type="TAIR" id="AT3G14720">
    <property type="gene designation" value="MPK19"/>
</dbReference>
<dbReference type="eggNOG" id="KOG0660">
    <property type="taxonomic scope" value="Eukaryota"/>
</dbReference>
<dbReference type="HOGENOM" id="CLU_000288_181_13_1"/>
<dbReference type="InParanoid" id="Q9LUC3"/>
<dbReference type="PhylomeDB" id="Q9LUC3"/>
<dbReference type="PRO" id="PR:Q9LUC3"/>
<dbReference type="Proteomes" id="UP000006548">
    <property type="component" value="Chromosome 3"/>
</dbReference>
<dbReference type="ExpressionAtlas" id="Q9LUC3">
    <property type="expression patterns" value="baseline and differential"/>
</dbReference>
<dbReference type="GO" id="GO:0005524">
    <property type="term" value="F:ATP binding"/>
    <property type="evidence" value="ECO:0007669"/>
    <property type="project" value="UniProtKB-KW"/>
</dbReference>
<dbReference type="GO" id="GO:0004707">
    <property type="term" value="F:MAP kinase activity"/>
    <property type="evidence" value="ECO:0000250"/>
    <property type="project" value="TAIR"/>
</dbReference>
<dbReference type="GO" id="GO:0106310">
    <property type="term" value="F:protein serine kinase activity"/>
    <property type="evidence" value="ECO:0007669"/>
    <property type="project" value="RHEA"/>
</dbReference>
<dbReference type="CDD" id="cd07859">
    <property type="entry name" value="STKc_TDY_MAPK"/>
    <property type="match status" value="1"/>
</dbReference>
<dbReference type="FunFam" id="1.10.510.10:FF:000017">
    <property type="entry name" value="Mitogen-activated protein kinase"/>
    <property type="match status" value="1"/>
</dbReference>
<dbReference type="FunFam" id="3.30.200.20:FF:000046">
    <property type="entry name" value="Mitogen-activated protein kinase"/>
    <property type="match status" value="1"/>
</dbReference>
<dbReference type="Gene3D" id="3.30.200.20">
    <property type="entry name" value="Phosphorylase Kinase, domain 1"/>
    <property type="match status" value="1"/>
</dbReference>
<dbReference type="Gene3D" id="1.10.510.10">
    <property type="entry name" value="Transferase(Phosphotransferase) domain 1"/>
    <property type="match status" value="1"/>
</dbReference>
<dbReference type="InterPro" id="IPR011009">
    <property type="entry name" value="Kinase-like_dom_sf"/>
</dbReference>
<dbReference type="InterPro" id="IPR050117">
    <property type="entry name" value="MAP_kinase"/>
</dbReference>
<dbReference type="InterPro" id="IPR003527">
    <property type="entry name" value="MAP_kinase_CS"/>
</dbReference>
<dbReference type="InterPro" id="IPR000719">
    <property type="entry name" value="Prot_kinase_dom"/>
</dbReference>
<dbReference type="InterPro" id="IPR017441">
    <property type="entry name" value="Protein_kinase_ATP_BS"/>
</dbReference>
<dbReference type="PANTHER" id="PTHR24055">
    <property type="entry name" value="MITOGEN-ACTIVATED PROTEIN KINASE"/>
    <property type="match status" value="1"/>
</dbReference>
<dbReference type="Pfam" id="PF00069">
    <property type="entry name" value="Pkinase"/>
    <property type="match status" value="1"/>
</dbReference>
<dbReference type="SMART" id="SM00220">
    <property type="entry name" value="S_TKc"/>
    <property type="match status" value="1"/>
</dbReference>
<dbReference type="SUPFAM" id="SSF56112">
    <property type="entry name" value="Protein kinase-like (PK-like)"/>
    <property type="match status" value="1"/>
</dbReference>
<dbReference type="PROSITE" id="PS01351">
    <property type="entry name" value="MAPK"/>
    <property type="match status" value="1"/>
</dbReference>
<dbReference type="PROSITE" id="PS00107">
    <property type="entry name" value="PROTEIN_KINASE_ATP"/>
    <property type="match status" value="1"/>
</dbReference>
<dbReference type="PROSITE" id="PS50011">
    <property type="entry name" value="PROTEIN_KINASE_DOM"/>
    <property type="match status" value="1"/>
</dbReference>
<protein>
    <recommendedName>
        <fullName>Mitogen-activated protein kinase 19</fullName>
        <shortName>AtMPK19</shortName>
        <shortName>MAP kinase 19</shortName>
        <ecNumber>2.7.11.24</ecNumber>
    </recommendedName>
</protein>
<keyword id="KW-0067">ATP-binding</keyword>
<keyword id="KW-0418">Kinase</keyword>
<keyword id="KW-0547">Nucleotide-binding</keyword>
<keyword id="KW-0597">Phosphoprotein</keyword>
<keyword id="KW-1185">Reference proteome</keyword>
<keyword id="KW-0723">Serine/threonine-protein kinase</keyword>
<keyword id="KW-0808">Transferase</keyword>
<evidence type="ECO:0000250" key="1"/>
<evidence type="ECO:0000250" key="2">
    <source>
        <dbReference type="UniProtKB" id="Q39026"/>
    </source>
</evidence>
<evidence type="ECO:0000255" key="3">
    <source>
        <dbReference type="PROSITE-ProRule" id="PRU00159"/>
    </source>
</evidence>
<evidence type="ECO:0000256" key="4">
    <source>
        <dbReference type="SAM" id="MobiDB-lite"/>
    </source>
</evidence>
<evidence type="ECO:0000305" key="5"/>
<gene>
    <name type="primary">MPK19</name>
    <name type="ordered locus">At3g14720</name>
    <name type="ORF">MIE1.22</name>
</gene>
<reference key="1">
    <citation type="journal article" date="2000" name="DNA Res.">
        <title>Structural analysis of Arabidopsis thaliana chromosome 3. I. Sequence features of the regions of 4,504,864 bp covered by sixty P1 and TAC clones.</title>
        <authorList>
            <person name="Sato S."/>
            <person name="Nakamura Y."/>
            <person name="Kaneko T."/>
            <person name="Katoh T."/>
            <person name="Asamizu E."/>
            <person name="Tabata S."/>
        </authorList>
    </citation>
    <scope>NUCLEOTIDE SEQUENCE [LARGE SCALE GENOMIC DNA]</scope>
    <source>
        <strain>cv. Columbia</strain>
    </source>
</reference>
<reference key="2">
    <citation type="journal article" date="2017" name="Plant J.">
        <title>Araport11: a complete reannotation of the Arabidopsis thaliana reference genome.</title>
        <authorList>
            <person name="Cheng C.Y."/>
            <person name="Krishnakumar V."/>
            <person name="Chan A.P."/>
            <person name="Thibaud-Nissen F."/>
            <person name="Schobel S."/>
            <person name="Town C.D."/>
        </authorList>
    </citation>
    <scope>GENOME REANNOTATION</scope>
    <source>
        <strain>cv. Columbia</strain>
    </source>
</reference>
<reference key="3">
    <citation type="journal article" date="2004" name="Genome Res.">
        <title>Whole genome sequence comparisons and 'full-length' cDNA sequences: a combined approach to evaluate and improve Arabidopsis genome annotation.</title>
        <authorList>
            <person name="Castelli V."/>
            <person name="Aury J.-M."/>
            <person name="Jaillon O."/>
            <person name="Wincker P."/>
            <person name="Clepet C."/>
            <person name="Menard M."/>
            <person name="Cruaud C."/>
            <person name="Quetier F."/>
            <person name="Scarpelli C."/>
            <person name="Schaechter V."/>
            <person name="Temple G."/>
            <person name="Caboche M."/>
            <person name="Weissenbach J."/>
            <person name="Salanoubat M."/>
        </authorList>
    </citation>
    <scope>NUCLEOTIDE SEQUENCE [LARGE SCALE MRNA] OF 518-598</scope>
    <source>
        <strain>cv. Columbia</strain>
    </source>
</reference>
<reference key="4">
    <citation type="journal article" date="2002" name="Trends Plant Sci.">
        <title>Mitogen-activated protein kinase cascades in plants: a new nomenclature.</title>
        <authorList>
            <consortium name="MAPK group"/>
        </authorList>
    </citation>
    <scope>GENE FAMILY</scope>
    <scope>NOMENCLATURE</scope>
</reference>
<reference key="5">
    <citation type="journal article" date="2006" name="Trends Plant Sci.">
        <title>Ancient signals: comparative genomics of plant MAPK and MAPKK gene families.</title>
        <authorList>
            <person name="Hamel L.P."/>
            <person name="Nicole M.C."/>
            <person name="Sritubtim S."/>
            <person name="Morency M.J."/>
            <person name="Ellis M."/>
            <person name="Ehlting J."/>
            <person name="Beaudoin N."/>
            <person name="Barbazuk B."/>
            <person name="Klessig D."/>
            <person name="Lee J."/>
            <person name="Martin G."/>
            <person name="Mundy J."/>
            <person name="Ohashi Y."/>
            <person name="Scheel D."/>
            <person name="Sheen J."/>
            <person name="Xing T."/>
            <person name="Zhang S."/>
            <person name="Seguin A."/>
            <person name="Ellis B.E."/>
        </authorList>
    </citation>
    <scope>GENE FAMILY</scope>
</reference>
<proteinExistence type="evidence at protein level"/>
<sequence>MQKTQEKKNMKEMEFFTEYGDANRYRILEVIGKGSYGVVCAAIDTQTGEKVAIKKINDVFEHVSDALRILREVKLLRLLRHPDIVEIKSIMLPPSKREFKDIYVVFELMESDLHQVIKANDDLTREHHQFFLYQMLRALKYMHTANVYHRDLKPKNILANANCKLKVCDFGLARVSFNDTPTTVFWTDYVATRWYRAPELCGSFCSKYTPAIDIWSIGCIFAEVLTGKPLFPGKSVVHQLDLITDLLGTPKSETIAGVRNEKARKYLNEMRKKNLVPFSQKFPNADPLALRLLQRLLAFDPKDRPTAAEALADPYFKCLAKVEREPSCQPISKMEFEFERRRLTKDDIRELIYREILEYHPQLLKDYMNSEGSSFLYPSAIGHLRKQFAYLEENSGKSGPVIPPDRKHASLPRSAVHSSAVNSNAQPSLNASDSRRVSIEPSRNGVVPSTSAYSTKPLGPPPRVPSGKPGRVVESSVTYENDRNLKESSYDARTSYYRSTVLPPQTVSPNCYFLPNTMNQEKRSGTEAASQPKPQFVPTQCNSAKPAELNPNPYVQSQHKVGIDAKLLHAQSQYGPAGAAAVAVAAHRNIGAVGYGMS</sequence>
<accession>Q9LUC3</accession>
<comment type="catalytic activity">
    <reaction>
        <text>L-seryl-[protein] + ATP = O-phospho-L-seryl-[protein] + ADP + H(+)</text>
        <dbReference type="Rhea" id="RHEA:17989"/>
        <dbReference type="Rhea" id="RHEA-COMP:9863"/>
        <dbReference type="Rhea" id="RHEA-COMP:11604"/>
        <dbReference type="ChEBI" id="CHEBI:15378"/>
        <dbReference type="ChEBI" id="CHEBI:29999"/>
        <dbReference type="ChEBI" id="CHEBI:30616"/>
        <dbReference type="ChEBI" id="CHEBI:83421"/>
        <dbReference type="ChEBI" id="CHEBI:456216"/>
        <dbReference type="EC" id="2.7.11.24"/>
    </reaction>
</comment>
<comment type="catalytic activity">
    <reaction>
        <text>L-threonyl-[protein] + ATP = O-phospho-L-threonyl-[protein] + ADP + H(+)</text>
        <dbReference type="Rhea" id="RHEA:46608"/>
        <dbReference type="Rhea" id="RHEA-COMP:11060"/>
        <dbReference type="Rhea" id="RHEA-COMP:11605"/>
        <dbReference type="ChEBI" id="CHEBI:15378"/>
        <dbReference type="ChEBI" id="CHEBI:30013"/>
        <dbReference type="ChEBI" id="CHEBI:30616"/>
        <dbReference type="ChEBI" id="CHEBI:61977"/>
        <dbReference type="ChEBI" id="CHEBI:456216"/>
        <dbReference type="EC" id="2.7.11.24"/>
    </reaction>
</comment>
<comment type="activity regulation">
    <text evidence="1">Activated by threonine and tyrosine phosphorylation.</text>
</comment>
<comment type="interaction">
    <interactant intactId="EBI-25512843">
        <id>Q9LUC3</id>
    </interactant>
    <interactant intactId="EBI-763232">
        <id>O80931</id>
        <label>AS1</label>
    </interactant>
    <organismsDiffer>false</organismsDiffer>
    <experiments>3</experiments>
</comment>
<comment type="interaction">
    <interactant intactId="EBI-25512843">
        <id>Q9LUC3</id>
    </interactant>
    <interactant intactId="EBI-25506855">
        <id>O23160</id>
        <label>MYB73</label>
    </interactant>
    <organismsDiffer>false</organismsDiffer>
    <experiments>3</experiments>
</comment>
<comment type="interaction">
    <interactant intactId="EBI-25512843">
        <id>Q9LUC3</id>
    </interactant>
    <interactant intactId="EBI-963624">
        <id>Q9SLH3</id>
        <label>RGA</label>
    </interactant>
    <organismsDiffer>false</organismsDiffer>
    <experiments>3</experiments>
</comment>
<comment type="interaction">
    <interactant intactId="EBI-25512843">
        <id>Q9LUC3</id>
    </interactant>
    <interactant intactId="EBI-15192297">
        <id>Q9LQF0</id>
        <label>TCP23</label>
    </interactant>
    <organismsDiffer>false</organismsDiffer>
    <experiments>3</experiments>
</comment>
<comment type="domain">
    <text>The TXY motif contains the threonine and tyrosine residues whose phosphorylation activates the MAP kinases.</text>
</comment>
<comment type="PTM">
    <text evidence="1">Dually phosphorylated on Thr-187 and Tyr-189, which activates the enzyme.</text>
</comment>
<comment type="similarity">
    <text evidence="5">Belongs to the protein kinase superfamily. CMGC Ser/Thr protein kinase family. MAP kinase subfamily.</text>
</comment>
<comment type="sequence caution" evidence="5">
    <conflict type="erroneous gene model prediction">
        <sequence resource="EMBL-CDS" id="BAB02403"/>
    </conflict>
</comment>
<feature type="chain" id="PRO_0000245819" description="Mitogen-activated protein kinase 19">
    <location>
        <begin position="1"/>
        <end position="598"/>
    </location>
</feature>
<feature type="domain" description="Protein kinase" evidence="3">
    <location>
        <begin position="25"/>
        <end position="316"/>
    </location>
</feature>
<feature type="region of interest" description="Disordered" evidence="4">
    <location>
        <begin position="396"/>
        <end position="486"/>
    </location>
</feature>
<feature type="short sequence motif" description="TXY">
    <location>
        <begin position="187"/>
        <end position="189"/>
    </location>
</feature>
<feature type="compositionally biased region" description="Low complexity" evidence="4">
    <location>
        <begin position="414"/>
        <end position="425"/>
    </location>
</feature>
<feature type="active site" description="Proton acceptor" evidence="3">
    <location>
        <position position="151"/>
    </location>
</feature>
<feature type="binding site" evidence="3">
    <location>
        <begin position="31"/>
        <end position="39"/>
    </location>
    <ligand>
        <name>ATP</name>
        <dbReference type="ChEBI" id="CHEBI:30616"/>
    </ligand>
</feature>
<feature type="binding site" evidence="3">
    <location>
        <position position="54"/>
    </location>
    <ligand>
        <name>ATP</name>
        <dbReference type="ChEBI" id="CHEBI:30616"/>
    </ligand>
</feature>
<feature type="modified residue" description="Phosphothreonine" evidence="2">
    <location>
        <position position="187"/>
    </location>
</feature>
<feature type="modified residue" description="Phosphotyrosine" evidence="2">
    <location>
        <position position="189"/>
    </location>
</feature>
<feature type="modified residue" description="Phosphothreonine" evidence="2">
    <location>
        <position position="192"/>
    </location>
</feature>
<organism>
    <name type="scientific">Arabidopsis thaliana</name>
    <name type="common">Mouse-ear cress</name>
    <dbReference type="NCBI Taxonomy" id="3702"/>
    <lineage>
        <taxon>Eukaryota</taxon>
        <taxon>Viridiplantae</taxon>
        <taxon>Streptophyta</taxon>
        <taxon>Embryophyta</taxon>
        <taxon>Tracheophyta</taxon>
        <taxon>Spermatophyta</taxon>
        <taxon>Magnoliopsida</taxon>
        <taxon>eudicotyledons</taxon>
        <taxon>Gunneridae</taxon>
        <taxon>Pentapetalae</taxon>
        <taxon>rosids</taxon>
        <taxon>malvids</taxon>
        <taxon>Brassicales</taxon>
        <taxon>Brassicaceae</taxon>
        <taxon>Camelineae</taxon>
        <taxon>Arabidopsis</taxon>
    </lineage>
</organism>